<protein>
    <recommendedName>
        <fullName evidence="1">Ribosome maturation factor RimM</fullName>
    </recommendedName>
</protein>
<comment type="function">
    <text evidence="1">An accessory protein needed during the final step in the assembly of 30S ribosomal subunit, possibly for assembly of the head region. Essential for efficient processing of 16S rRNA. May be needed both before and after RbfA during the maturation of 16S rRNA. It has affinity for free ribosomal 30S subunits but not for 70S ribosomes.</text>
</comment>
<comment type="subunit">
    <text evidence="1">Binds ribosomal protein uS19.</text>
</comment>
<comment type="subcellular location">
    <subcellularLocation>
        <location evidence="1">Cytoplasm</location>
    </subcellularLocation>
</comment>
<comment type="domain">
    <text evidence="1">The PRC barrel domain binds ribosomal protein uS19.</text>
</comment>
<comment type="similarity">
    <text evidence="1">Belongs to the RimM family.</text>
</comment>
<organism>
    <name type="scientific">Helicobacter acinonychis (strain Sheeba)</name>
    <dbReference type="NCBI Taxonomy" id="382638"/>
    <lineage>
        <taxon>Bacteria</taxon>
        <taxon>Pseudomonadati</taxon>
        <taxon>Campylobacterota</taxon>
        <taxon>Epsilonproteobacteria</taxon>
        <taxon>Campylobacterales</taxon>
        <taxon>Helicobacteraceae</taxon>
        <taxon>Helicobacter</taxon>
    </lineage>
</organism>
<dbReference type="EMBL" id="AM260522">
    <property type="protein sequence ID" value="CAK00055.1"/>
    <property type="molecule type" value="Genomic_DNA"/>
</dbReference>
<dbReference type="RefSeq" id="WP_011578146.1">
    <property type="nucleotide sequence ID" value="NC_008229.1"/>
</dbReference>
<dbReference type="SMR" id="Q17WC1"/>
<dbReference type="STRING" id="382638.Hac_1316"/>
<dbReference type="GeneID" id="31758637"/>
<dbReference type="KEGG" id="hac:Hac_1316"/>
<dbReference type="eggNOG" id="COG0806">
    <property type="taxonomic scope" value="Bacteria"/>
</dbReference>
<dbReference type="HOGENOM" id="CLU_077636_2_0_7"/>
<dbReference type="BioCyc" id="HACI382638:HAC_RS05645-MONOMER"/>
<dbReference type="Proteomes" id="UP000000775">
    <property type="component" value="Chromosome"/>
</dbReference>
<dbReference type="GO" id="GO:0005737">
    <property type="term" value="C:cytoplasm"/>
    <property type="evidence" value="ECO:0007669"/>
    <property type="project" value="UniProtKB-SubCell"/>
</dbReference>
<dbReference type="GO" id="GO:0005840">
    <property type="term" value="C:ribosome"/>
    <property type="evidence" value="ECO:0007669"/>
    <property type="project" value="InterPro"/>
</dbReference>
<dbReference type="GO" id="GO:0043022">
    <property type="term" value="F:ribosome binding"/>
    <property type="evidence" value="ECO:0007669"/>
    <property type="project" value="InterPro"/>
</dbReference>
<dbReference type="GO" id="GO:0042274">
    <property type="term" value="P:ribosomal small subunit biogenesis"/>
    <property type="evidence" value="ECO:0007669"/>
    <property type="project" value="UniProtKB-UniRule"/>
</dbReference>
<dbReference type="GO" id="GO:0006364">
    <property type="term" value="P:rRNA processing"/>
    <property type="evidence" value="ECO:0007669"/>
    <property type="project" value="UniProtKB-UniRule"/>
</dbReference>
<dbReference type="Gene3D" id="2.30.30.240">
    <property type="entry name" value="PRC-barrel domain"/>
    <property type="match status" value="1"/>
</dbReference>
<dbReference type="Gene3D" id="2.40.30.60">
    <property type="entry name" value="RimM"/>
    <property type="match status" value="1"/>
</dbReference>
<dbReference type="HAMAP" id="MF_00014">
    <property type="entry name" value="Ribosome_mat_RimM"/>
    <property type="match status" value="1"/>
</dbReference>
<dbReference type="InterPro" id="IPR027275">
    <property type="entry name" value="PRC-brl_dom"/>
</dbReference>
<dbReference type="InterPro" id="IPR011033">
    <property type="entry name" value="PRC_barrel-like_sf"/>
</dbReference>
<dbReference type="InterPro" id="IPR011961">
    <property type="entry name" value="RimM"/>
</dbReference>
<dbReference type="InterPro" id="IPR002676">
    <property type="entry name" value="RimM_N"/>
</dbReference>
<dbReference type="InterPro" id="IPR036976">
    <property type="entry name" value="RimM_N_sf"/>
</dbReference>
<dbReference type="InterPro" id="IPR009000">
    <property type="entry name" value="Transl_B-barrel_sf"/>
</dbReference>
<dbReference type="NCBIfam" id="TIGR02273">
    <property type="entry name" value="16S_RimM"/>
    <property type="match status" value="1"/>
</dbReference>
<dbReference type="PANTHER" id="PTHR33692">
    <property type="entry name" value="RIBOSOME MATURATION FACTOR RIMM"/>
    <property type="match status" value="1"/>
</dbReference>
<dbReference type="PANTHER" id="PTHR33692:SF1">
    <property type="entry name" value="RIBOSOME MATURATION FACTOR RIMM"/>
    <property type="match status" value="1"/>
</dbReference>
<dbReference type="Pfam" id="PF05239">
    <property type="entry name" value="PRC"/>
    <property type="match status" value="1"/>
</dbReference>
<dbReference type="Pfam" id="PF01782">
    <property type="entry name" value="RimM"/>
    <property type="match status" value="1"/>
</dbReference>
<dbReference type="SUPFAM" id="SSF50346">
    <property type="entry name" value="PRC-barrel domain"/>
    <property type="match status" value="1"/>
</dbReference>
<dbReference type="SUPFAM" id="SSF50447">
    <property type="entry name" value="Translation proteins"/>
    <property type="match status" value="1"/>
</dbReference>
<feature type="chain" id="PRO_1000001180" description="Ribosome maturation factor RimM">
    <location>
        <begin position="1"/>
        <end position="180"/>
    </location>
</feature>
<feature type="domain" description="PRC barrel" evidence="1">
    <location>
        <begin position="97"/>
        <end position="176"/>
    </location>
</feature>
<name>RIMM_HELAH</name>
<sequence>MLLVGRIGKSVGLNGGLKLHLESDFPECLKKGVKVSVAPLNAFSHASFKDYVIHSYEHAKNLLFLETINTPEMARELTNLGLFMSETESKKLCVLKEGEFFYCDLIGLSVVEENEILGKVIEIQRISHIDYFMVETTLNLVEKGLAKIFLIPYRDFYIKEILLQDKKITTNNAKTLLENS</sequence>
<accession>Q17WC1</accession>
<reference key="1">
    <citation type="journal article" date="2006" name="PLoS Genet.">
        <title>Who ate whom? Adaptive Helicobacter genomic changes that accompanied a host jump from early humans to large felines.</title>
        <authorList>
            <person name="Eppinger M."/>
            <person name="Baar C."/>
            <person name="Linz B."/>
            <person name="Raddatz G."/>
            <person name="Lanz C."/>
            <person name="Keller H."/>
            <person name="Morelli G."/>
            <person name="Gressmann H."/>
            <person name="Achtman M."/>
            <person name="Schuster S.C."/>
        </authorList>
    </citation>
    <scope>NUCLEOTIDE SEQUENCE [LARGE SCALE GENOMIC DNA]</scope>
    <source>
        <strain>Sheeba</strain>
    </source>
</reference>
<proteinExistence type="inferred from homology"/>
<keyword id="KW-0143">Chaperone</keyword>
<keyword id="KW-0963">Cytoplasm</keyword>
<keyword id="KW-0690">Ribosome biogenesis</keyword>
<keyword id="KW-0698">rRNA processing</keyword>
<evidence type="ECO:0000255" key="1">
    <source>
        <dbReference type="HAMAP-Rule" id="MF_00014"/>
    </source>
</evidence>
<gene>
    <name evidence="1" type="primary">rimM</name>
    <name type="ordered locus">Hac_1316</name>
</gene>